<name>GPMI_LEGPL</name>
<dbReference type="EC" id="5.4.2.12" evidence="1"/>
<dbReference type="EMBL" id="CR628337">
    <property type="protein sequence ID" value="CAH14769.1"/>
    <property type="molecule type" value="Genomic_DNA"/>
</dbReference>
<dbReference type="RefSeq" id="WP_011214741.1">
    <property type="nucleotide sequence ID" value="NC_006369.1"/>
</dbReference>
<dbReference type="SMR" id="Q5WZ43"/>
<dbReference type="KEGG" id="lpf:lpl0539"/>
<dbReference type="LegioList" id="lpl0539"/>
<dbReference type="HOGENOM" id="CLU_026099_2_0_6"/>
<dbReference type="UniPathway" id="UPA00109">
    <property type="reaction ID" value="UER00186"/>
</dbReference>
<dbReference type="Proteomes" id="UP000002517">
    <property type="component" value="Chromosome"/>
</dbReference>
<dbReference type="GO" id="GO:0005829">
    <property type="term" value="C:cytosol"/>
    <property type="evidence" value="ECO:0007669"/>
    <property type="project" value="TreeGrafter"/>
</dbReference>
<dbReference type="GO" id="GO:0030145">
    <property type="term" value="F:manganese ion binding"/>
    <property type="evidence" value="ECO:0007669"/>
    <property type="project" value="UniProtKB-UniRule"/>
</dbReference>
<dbReference type="GO" id="GO:0004619">
    <property type="term" value="F:phosphoglycerate mutase activity"/>
    <property type="evidence" value="ECO:0007669"/>
    <property type="project" value="UniProtKB-EC"/>
</dbReference>
<dbReference type="GO" id="GO:0006007">
    <property type="term" value="P:glucose catabolic process"/>
    <property type="evidence" value="ECO:0007669"/>
    <property type="project" value="InterPro"/>
</dbReference>
<dbReference type="GO" id="GO:0006096">
    <property type="term" value="P:glycolytic process"/>
    <property type="evidence" value="ECO:0007669"/>
    <property type="project" value="UniProtKB-UniRule"/>
</dbReference>
<dbReference type="CDD" id="cd16010">
    <property type="entry name" value="iPGM"/>
    <property type="match status" value="1"/>
</dbReference>
<dbReference type="FunFam" id="3.40.1450.10:FF:000002">
    <property type="entry name" value="2,3-bisphosphoglycerate-independent phosphoglycerate mutase"/>
    <property type="match status" value="1"/>
</dbReference>
<dbReference type="Gene3D" id="3.40.720.10">
    <property type="entry name" value="Alkaline Phosphatase, subunit A"/>
    <property type="match status" value="1"/>
</dbReference>
<dbReference type="Gene3D" id="3.40.1450.10">
    <property type="entry name" value="BPG-independent phosphoglycerate mutase, domain B"/>
    <property type="match status" value="1"/>
</dbReference>
<dbReference type="HAMAP" id="MF_01038">
    <property type="entry name" value="GpmI"/>
    <property type="match status" value="1"/>
</dbReference>
<dbReference type="InterPro" id="IPR017850">
    <property type="entry name" value="Alkaline_phosphatase_core_sf"/>
</dbReference>
<dbReference type="InterPro" id="IPR011258">
    <property type="entry name" value="BPG-indep_PGM_N"/>
</dbReference>
<dbReference type="InterPro" id="IPR006124">
    <property type="entry name" value="Metalloenzyme"/>
</dbReference>
<dbReference type="InterPro" id="IPR036646">
    <property type="entry name" value="PGAM_B_sf"/>
</dbReference>
<dbReference type="InterPro" id="IPR005995">
    <property type="entry name" value="Pgm_bpd_ind"/>
</dbReference>
<dbReference type="NCBIfam" id="TIGR01307">
    <property type="entry name" value="pgm_bpd_ind"/>
    <property type="match status" value="1"/>
</dbReference>
<dbReference type="PANTHER" id="PTHR31637">
    <property type="entry name" value="2,3-BISPHOSPHOGLYCERATE-INDEPENDENT PHOSPHOGLYCERATE MUTASE"/>
    <property type="match status" value="1"/>
</dbReference>
<dbReference type="PANTHER" id="PTHR31637:SF0">
    <property type="entry name" value="2,3-BISPHOSPHOGLYCERATE-INDEPENDENT PHOSPHOGLYCERATE MUTASE"/>
    <property type="match status" value="1"/>
</dbReference>
<dbReference type="Pfam" id="PF06415">
    <property type="entry name" value="iPGM_N"/>
    <property type="match status" value="1"/>
</dbReference>
<dbReference type="Pfam" id="PF01676">
    <property type="entry name" value="Metalloenzyme"/>
    <property type="match status" value="1"/>
</dbReference>
<dbReference type="PIRSF" id="PIRSF001492">
    <property type="entry name" value="IPGAM"/>
    <property type="match status" value="1"/>
</dbReference>
<dbReference type="SUPFAM" id="SSF64158">
    <property type="entry name" value="2,3-Bisphosphoglycerate-independent phosphoglycerate mutase, substrate-binding domain"/>
    <property type="match status" value="1"/>
</dbReference>
<dbReference type="SUPFAM" id="SSF53649">
    <property type="entry name" value="Alkaline phosphatase-like"/>
    <property type="match status" value="1"/>
</dbReference>
<sequence length="514" mass="57621">MSHNAPLVLMILDGWGYNENDRYNAIAKANTPQWDEWWQTCPHILLKASGLPVGLPDEQMGNSEVGHMHIGAGRVIQQDFTRINEAINNGKFAKNAVFHEVIDQLKKTEKSLHIMGLLSPGGVHSHEQHLFALLALCNQKKFRSVHLHLFLDGRDTPPQSALDSLKCLNEELAKHPVATINSICGRYYAMDRDKRWQRVEPVYNLLTQGKSERQFPDAETAIHFYYKNKISDEFVPPTLIGKEHSIQDGDAVLFFNFRADRARQLTSTFLDPSFKGFERKTLPKLSYFVSMTQYDKNLFTTTAFPPVPLNNTLGEVLSSHGLSQLRIAETEKYAHVTFFFNGGCESVFTNEERIMVPSPQVATYDLQPEMSAHELTKTLIAAINSQDYHVIICNYANADMVGHTGNFEATVQAIECLDQCMQQVWQALKNNGGKLLITADHGNAEEMFSEATNQAHTAHTSEPVPFLYVGGGWHFTHSEGSLIDIAPSLLALLGITPPPEMTGRILLEKNHAHA</sequence>
<keyword id="KW-0324">Glycolysis</keyword>
<keyword id="KW-0413">Isomerase</keyword>
<keyword id="KW-0464">Manganese</keyword>
<keyword id="KW-0479">Metal-binding</keyword>
<proteinExistence type="inferred from homology"/>
<accession>Q5WZ43</accession>
<feature type="chain" id="PRO_0000212157" description="2,3-bisphosphoglycerate-independent phosphoglycerate mutase">
    <location>
        <begin position="1"/>
        <end position="514"/>
    </location>
</feature>
<feature type="active site" description="Phosphoserine intermediate" evidence="1">
    <location>
        <position position="63"/>
    </location>
</feature>
<feature type="binding site" evidence="1">
    <location>
        <position position="13"/>
    </location>
    <ligand>
        <name>Mn(2+)</name>
        <dbReference type="ChEBI" id="CHEBI:29035"/>
        <label>2</label>
    </ligand>
</feature>
<feature type="binding site" evidence="1">
    <location>
        <position position="63"/>
    </location>
    <ligand>
        <name>Mn(2+)</name>
        <dbReference type="ChEBI" id="CHEBI:29035"/>
        <label>2</label>
    </ligand>
</feature>
<feature type="binding site" evidence="1">
    <location>
        <position position="124"/>
    </location>
    <ligand>
        <name>substrate</name>
    </ligand>
</feature>
<feature type="binding site" evidence="1">
    <location>
        <begin position="154"/>
        <end position="155"/>
    </location>
    <ligand>
        <name>substrate</name>
    </ligand>
</feature>
<feature type="binding site" evidence="1">
    <location>
        <position position="186"/>
    </location>
    <ligand>
        <name>substrate</name>
    </ligand>
</feature>
<feature type="binding site" evidence="1">
    <location>
        <position position="192"/>
    </location>
    <ligand>
        <name>substrate</name>
    </ligand>
</feature>
<feature type="binding site" evidence="1">
    <location>
        <begin position="258"/>
        <end position="261"/>
    </location>
    <ligand>
        <name>substrate</name>
    </ligand>
</feature>
<feature type="binding site" evidence="1">
    <location>
        <position position="332"/>
    </location>
    <ligand>
        <name>substrate</name>
    </ligand>
</feature>
<feature type="binding site" evidence="1">
    <location>
        <position position="399"/>
    </location>
    <ligand>
        <name>Mn(2+)</name>
        <dbReference type="ChEBI" id="CHEBI:29035"/>
        <label>1</label>
    </ligand>
</feature>
<feature type="binding site" evidence="1">
    <location>
        <position position="403"/>
    </location>
    <ligand>
        <name>Mn(2+)</name>
        <dbReference type="ChEBI" id="CHEBI:29035"/>
        <label>1</label>
    </ligand>
</feature>
<feature type="binding site" evidence="1">
    <location>
        <position position="440"/>
    </location>
    <ligand>
        <name>Mn(2+)</name>
        <dbReference type="ChEBI" id="CHEBI:29035"/>
        <label>2</label>
    </ligand>
</feature>
<feature type="binding site" evidence="1">
    <location>
        <position position="441"/>
    </location>
    <ligand>
        <name>Mn(2+)</name>
        <dbReference type="ChEBI" id="CHEBI:29035"/>
        <label>2</label>
    </ligand>
</feature>
<feature type="binding site" evidence="1">
    <location>
        <position position="459"/>
    </location>
    <ligand>
        <name>Mn(2+)</name>
        <dbReference type="ChEBI" id="CHEBI:29035"/>
        <label>1</label>
    </ligand>
</feature>
<organism>
    <name type="scientific">Legionella pneumophila (strain Lens)</name>
    <dbReference type="NCBI Taxonomy" id="297245"/>
    <lineage>
        <taxon>Bacteria</taxon>
        <taxon>Pseudomonadati</taxon>
        <taxon>Pseudomonadota</taxon>
        <taxon>Gammaproteobacteria</taxon>
        <taxon>Legionellales</taxon>
        <taxon>Legionellaceae</taxon>
        <taxon>Legionella</taxon>
    </lineage>
</organism>
<evidence type="ECO:0000255" key="1">
    <source>
        <dbReference type="HAMAP-Rule" id="MF_01038"/>
    </source>
</evidence>
<reference key="1">
    <citation type="journal article" date="2004" name="Nat. Genet.">
        <title>Evidence in the Legionella pneumophila genome for exploitation of host cell functions and high genome plasticity.</title>
        <authorList>
            <person name="Cazalet C."/>
            <person name="Rusniok C."/>
            <person name="Brueggemann H."/>
            <person name="Zidane N."/>
            <person name="Magnier A."/>
            <person name="Ma L."/>
            <person name="Tichit M."/>
            <person name="Jarraud S."/>
            <person name="Bouchier C."/>
            <person name="Vandenesch F."/>
            <person name="Kunst F."/>
            <person name="Etienne J."/>
            <person name="Glaser P."/>
            <person name="Buchrieser C."/>
        </authorList>
    </citation>
    <scope>NUCLEOTIDE SEQUENCE [LARGE SCALE GENOMIC DNA]</scope>
    <source>
        <strain>Lens</strain>
    </source>
</reference>
<protein>
    <recommendedName>
        <fullName evidence="1">2,3-bisphosphoglycerate-independent phosphoglycerate mutase</fullName>
        <shortName evidence="1">BPG-independent PGAM</shortName>
        <shortName evidence="1">Phosphoglyceromutase</shortName>
        <shortName evidence="1">iPGM</shortName>
        <ecNumber evidence="1">5.4.2.12</ecNumber>
    </recommendedName>
</protein>
<comment type="function">
    <text evidence="1">Catalyzes the interconversion of 2-phosphoglycerate and 3-phosphoglycerate.</text>
</comment>
<comment type="catalytic activity">
    <reaction evidence="1">
        <text>(2R)-2-phosphoglycerate = (2R)-3-phosphoglycerate</text>
        <dbReference type="Rhea" id="RHEA:15901"/>
        <dbReference type="ChEBI" id="CHEBI:58272"/>
        <dbReference type="ChEBI" id="CHEBI:58289"/>
        <dbReference type="EC" id="5.4.2.12"/>
    </reaction>
</comment>
<comment type="cofactor">
    <cofactor evidence="1">
        <name>Mn(2+)</name>
        <dbReference type="ChEBI" id="CHEBI:29035"/>
    </cofactor>
    <text evidence="1">Binds 2 manganese ions per subunit.</text>
</comment>
<comment type="pathway">
    <text evidence="1">Carbohydrate degradation; glycolysis; pyruvate from D-glyceraldehyde 3-phosphate: step 3/5.</text>
</comment>
<comment type="subunit">
    <text evidence="1">Monomer.</text>
</comment>
<comment type="similarity">
    <text evidence="1">Belongs to the BPG-independent phosphoglycerate mutase family.</text>
</comment>
<gene>
    <name evidence="1" type="primary">gpmI</name>
    <name type="ordered locus">lpl0539</name>
</gene>